<reference key="1">
    <citation type="journal article" date="2005" name="Science">
        <title>The transcriptional landscape of the mammalian genome.</title>
        <authorList>
            <person name="Carninci P."/>
            <person name="Kasukawa T."/>
            <person name="Katayama S."/>
            <person name="Gough J."/>
            <person name="Frith M.C."/>
            <person name="Maeda N."/>
            <person name="Oyama R."/>
            <person name="Ravasi T."/>
            <person name="Lenhard B."/>
            <person name="Wells C."/>
            <person name="Kodzius R."/>
            <person name="Shimokawa K."/>
            <person name="Bajic V.B."/>
            <person name="Brenner S.E."/>
            <person name="Batalov S."/>
            <person name="Forrest A.R."/>
            <person name="Zavolan M."/>
            <person name="Davis M.J."/>
            <person name="Wilming L.G."/>
            <person name="Aidinis V."/>
            <person name="Allen J.E."/>
            <person name="Ambesi-Impiombato A."/>
            <person name="Apweiler R."/>
            <person name="Aturaliya R.N."/>
            <person name="Bailey T.L."/>
            <person name="Bansal M."/>
            <person name="Baxter L."/>
            <person name="Beisel K.W."/>
            <person name="Bersano T."/>
            <person name="Bono H."/>
            <person name="Chalk A.M."/>
            <person name="Chiu K.P."/>
            <person name="Choudhary V."/>
            <person name="Christoffels A."/>
            <person name="Clutterbuck D.R."/>
            <person name="Crowe M.L."/>
            <person name="Dalla E."/>
            <person name="Dalrymple B.P."/>
            <person name="de Bono B."/>
            <person name="Della Gatta G."/>
            <person name="di Bernardo D."/>
            <person name="Down T."/>
            <person name="Engstrom P."/>
            <person name="Fagiolini M."/>
            <person name="Faulkner G."/>
            <person name="Fletcher C.F."/>
            <person name="Fukushima T."/>
            <person name="Furuno M."/>
            <person name="Futaki S."/>
            <person name="Gariboldi M."/>
            <person name="Georgii-Hemming P."/>
            <person name="Gingeras T.R."/>
            <person name="Gojobori T."/>
            <person name="Green R.E."/>
            <person name="Gustincich S."/>
            <person name="Harbers M."/>
            <person name="Hayashi Y."/>
            <person name="Hensch T.K."/>
            <person name="Hirokawa N."/>
            <person name="Hill D."/>
            <person name="Huminiecki L."/>
            <person name="Iacono M."/>
            <person name="Ikeo K."/>
            <person name="Iwama A."/>
            <person name="Ishikawa T."/>
            <person name="Jakt M."/>
            <person name="Kanapin A."/>
            <person name="Katoh M."/>
            <person name="Kawasawa Y."/>
            <person name="Kelso J."/>
            <person name="Kitamura H."/>
            <person name="Kitano H."/>
            <person name="Kollias G."/>
            <person name="Krishnan S.P."/>
            <person name="Kruger A."/>
            <person name="Kummerfeld S.K."/>
            <person name="Kurochkin I.V."/>
            <person name="Lareau L.F."/>
            <person name="Lazarevic D."/>
            <person name="Lipovich L."/>
            <person name="Liu J."/>
            <person name="Liuni S."/>
            <person name="McWilliam S."/>
            <person name="Madan Babu M."/>
            <person name="Madera M."/>
            <person name="Marchionni L."/>
            <person name="Matsuda H."/>
            <person name="Matsuzawa S."/>
            <person name="Miki H."/>
            <person name="Mignone F."/>
            <person name="Miyake S."/>
            <person name="Morris K."/>
            <person name="Mottagui-Tabar S."/>
            <person name="Mulder N."/>
            <person name="Nakano N."/>
            <person name="Nakauchi H."/>
            <person name="Ng P."/>
            <person name="Nilsson R."/>
            <person name="Nishiguchi S."/>
            <person name="Nishikawa S."/>
            <person name="Nori F."/>
            <person name="Ohara O."/>
            <person name="Okazaki Y."/>
            <person name="Orlando V."/>
            <person name="Pang K.C."/>
            <person name="Pavan W.J."/>
            <person name="Pavesi G."/>
            <person name="Pesole G."/>
            <person name="Petrovsky N."/>
            <person name="Piazza S."/>
            <person name="Reed J."/>
            <person name="Reid J.F."/>
            <person name="Ring B.Z."/>
            <person name="Ringwald M."/>
            <person name="Rost B."/>
            <person name="Ruan Y."/>
            <person name="Salzberg S.L."/>
            <person name="Sandelin A."/>
            <person name="Schneider C."/>
            <person name="Schoenbach C."/>
            <person name="Sekiguchi K."/>
            <person name="Semple C.A."/>
            <person name="Seno S."/>
            <person name="Sessa L."/>
            <person name="Sheng Y."/>
            <person name="Shibata Y."/>
            <person name="Shimada H."/>
            <person name="Shimada K."/>
            <person name="Silva D."/>
            <person name="Sinclair B."/>
            <person name="Sperling S."/>
            <person name="Stupka E."/>
            <person name="Sugiura K."/>
            <person name="Sultana R."/>
            <person name="Takenaka Y."/>
            <person name="Taki K."/>
            <person name="Tammoja K."/>
            <person name="Tan S.L."/>
            <person name="Tang S."/>
            <person name="Taylor M.S."/>
            <person name="Tegner J."/>
            <person name="Teichmann S.A."/>
            <person name="Ueda H.R."/>
            <person name="van Nimwegen E."/>
            <person name="Verardo R."/>
            <person name="Wei C.L."/>
            <person name="Yagi K."/>
            <person name="Yamanishi H."/>
            <person name="Zabarovsky E."/>
            <person name="Zhu S."/>
            <person name="Zimmer A."/>
            <person name="Hide W."/>
            <person name="Bult C."/>
            <person name="Grimmond S.M."/>
            <person name="Teasdale R.D."/>
            <person name="Liu E.T."/>
            <person name="Brusic V."/>
            <person name="Quackenbush J."/>
            <person name="Wahlestedt C."/>
            <person name="Mattick J.S."/>
            <person name="Hume D.A."/>
            <person name="Kai C."/>
            <person name="Sasaki D."/>
            <person name="Tomaru Y."/>
            <person name="Fukuda S."/>
            <person name="Kanamori-Katayama M."/>
            <person name="Suzuki M."/>
            <person name="Aoki J."/>
            <person name="Arakawa T."/>
            <person name="Iida J."/>
            <person name="Imamura K."/>
            <person name="Itoh M."/>
            <person name="Kato T."/>
            <person name="Kawaji H."/>
            <person name="Kawagashira N."/>
            <person name="Kawashima T."/>
            <person name="Kojima M."/>
            <person name="Kondo S."/>
            <person name="Konno H."/>
            <person name="Nakano K."/>
            <person name="Ninomiya N."/>
            <person name="Nishio T."/>
            <person name="Okada M."/>
            <person name="Plessy C."/>
            <person name="Shibata K."/>
            <person name="Shiraki T."/>
            <person name="Suzuki S."/>
            <person name="Tagami M."/>
            <person name="Waki K."/>
            <person name="Watahiki A."/>
            <person name="Okamura-Oho Y."/>
            <person name="Suzuki H."/>
            <person name="Kawai J."/>
            <person name="Hayashizaki Y."/>
        </authorList>
    </citation>
    <scope>NUCLEOTIDE SEQUENCE [LARGE SCALE MRNA] (ISOFORMS 1; 2 AND 3)</scope>
    <source>
        <strain>C57BL/6J</strain>
        <tissue>Bone marrow</tissue>
        <tissue>Medulla oblongata</tissue>
        <tissue>Spinal ganglion</tissue>
    </source>
</reference>
<reference key="2">
    <citation type="journal article" date="2004" name="DNA Res.">
        <title>Prediction of the coding sequences of mouse homologues of KIAA gene: IV. The complete nucleotide sequences of 500 mouse KIAA-homologous cDNAs identified by screening of terminal sequences of cDNA clones randomly sampled from size-fractionated libraries.</title>
        <authorList>
            <person name="Okazaki N."/>
            <person name="Kikuno R."/>
            <person name="Ohara R."/>
            <person name="Inamoto S."/>
            <person name="Koseki H."/>
            <person name="Hiraoka S."/>
            <person name="Saga Y."/>
            <person name="Seino S."/>
            <person name="Nishimura M."/>
            <person name="Kaisho T."/>
            <person name="Hoshino K."/>
            <person name="Kitamura H."/>
            <person name="Nagase T."/>
            <person name="Ohara O."/>
            <person name="Koga H."/>
        </authorList>
    </citation>
    <scope>NUCLEOTIDE SEQUENCE [LARGE SCALE MRNA] OF 2-1024 (ISOFORM 1)</scope>
    <source>
        <tissue>Embryonic tail</tissue>
    </source>
</reference>
<keyword id="KW-0025">Alternative splicing</keyword>
<keyword id="KW-0963">Cytoplasm</keyword>
<keyword id="KW-0206">Cytoskeleton</keyword>
<keyword id="KW-0493">Microtubule</keyword>
<keyword id="KW-1185">Reference proteome</keyword>
<gene>
    <name type="primary">Tubgcp5</name>
    <name type="synonym">Kiaa1899</name>
</gene>
<sequence length="1024" mass="117977">MARPKSSGSRMDRQLEHDVCELVRQVTGLQDEADPNFQLALDFVWSNFRFHRFLDVNSHKVEKTIEGIYEKFTIHSDLNKAASWKRLTKEFLNASLPSTEKIKTDAHYSILSLLLCLSDSPSNSNYVETPREKEVEKKDDFDWGKYLMEGEEIGLGPNIDTPNWSEDSDDEDAQQPLSREDSGIQVDRTPLEEQDHNRKGGPQVCWEDEPDSRSWLEQHVVHQYWTTRRFRIPHSAHLHSNLAAVWDQHLYSSDPLYVPDDRVVVTETQVIRETLWLLSGVKKMFIFQLIDGKVTVRNNIIVTHLTHSCLRSVLEQIAAYGQVVFRLQEFIDEVMGHSSESLPPGNGPIPKKQPDAPFRTYQAFMWALYKYFINFKEELTDIEKCVISSDTTITLAIVVNKLAPRLAQLKVLDKVFSTGVAEVPPDTRNVVRASHLLNTLYKAILEYDNVGEASEQTVSLLFSLWVETVRPYLQTVDEWIVHGHLWDGAREFIIQRNKNVPVNHRDFWYATYTLYSVSEKTENEDKVSDSASASSGSDQGPSSRQHTMVSFLKPVLKQIIMAGKSMQLLKNLNCAEGPACQAAARDAERKSLYTLFLESIQLRLQHGEDSAPHIVNEDQTTKENLIKMQSIAERHLELDDIHDPLLAINFARLYLEQSDFHEKFAGGDICVDRSSESVTCQTFELTLRSCLYPHIDKQYLHCCGNLMQTLKRDFRLVEYLQAMRNFFLMEGGDTMYDFYTSIFDKIREKETWQNVSFLNVQLQEAVGQRYPEDSLRLSISFENVDTTKKKLPVHILDGLTLSYKVPWPVDIVISVECQKIYNQVFLLLLQIKWAKYSLDVLLFGELGNAAERSQAKEDIPRDQDTPSQFGPPKESLRQQIHRMFLLRVKLMHFVNSLHNYIMTRILHSTGLEFQHQVEEAKDLDQLIKIHYRYLSTIHDRCLLREKVSFVKEAIMKVLNLALMFAEGWQAGLGAWQMESIEKMESDFKNCHMFLVTILNKAVCRGSFPHLESLALSLMAGMEQS</sequence>
<protein>
    <recommendedName>
        <fullName>Gamma-tubulin complex component 5</fullName>
        <shortName>GCP-5</shortName>
    </recommendedName>
</protein>
<feature type="chain" id="PRO_0000323605" description="Gamma-tubulin complex component 5">
    <location>
        <begin position="1"/>
        <end position="1024"/>
    </location>
</feature>
<feature type="region of interest" description="Disordered" evidence="2">
    <location>
        <begin position="153"/>
        <end position="203"/>
    </location>
</feature>
<feature type="region of interest" description="Disordered" evidence="2">
    <location>
        <begin position="523"/>
        <end position="545"/>
    </location>
</feature>
<feature type="region of interest" description="Disordered" evidence="2">
    <location>
        <begin position="853"/>
        <end position="873"/>
    </location>
</feature>
<feature type="compositionally biased region" description="Basic and acidic residues" evidence="2">
    <location>
        <begin position="189"/>
        <end position="198"/>
    </location>
</feature>
<feature type="compositionally biased region" description="Low complexity" evidence="2">
    <location>
        <begin position="529"/>
        <end position="543"/>
    </location>
</feature>
<feature type="compositionally biased region" description="Basic and acidic residues" evidence="2">
    <location>
        <begin position="853"/>
        <end position="864"/>
    </location>
</feature>
<feature type="splice variant" id="VSP_032040" description="In isoform 2." evidence="3">
    <location>
        <begin position="654"/>
        <end position="716"/>
    </location>
</feature>
<feature type="splice variant" id="VSP_032041" description="In isoform 3." evidence="3">
    <location>
        <begin position="977"/>
        <end position="1024"/>
    </location>
</feature>
<feature type="sequence conflict" description="In Ref. 2; BAD32569." evidence="4" ref="2">
    <original>S</original>
    <variation>L</variation>
    <location>
        <position position="9"/>
    </location>
</feature>
<feature type="sequence conflict" description="In Ref. 1; BAC27661." evidence="4" ref="1">
    <original>A</original>
    <variation>G</variation>
    <location>
        <position position="82"/>
    </location>
</feature>
<feature type="sequence conflict" description="In Ref. 2; BAD32569." evidence="4" ref="2">
    <location>
        <begin position="172"/>
        <end position="366"/>
    </location>
</feature>
<feature type="sequence conflict" description="In Ref. 1; BAC27661." evidence="4" ref="1">
    <original>W</original>
    <variation>L</variation>
    <location>
        <position position="225"/>
    </location>
</feature>
<feature type="sequence conflict" description="In Ref. 1; BAE31930/BAE31910/BAE30892/BAE30414." evidence="4" ref="1">
    <original>D</original>
    <variation>Y</variation>
    <location>
        <position position="332"/>
    </location>
</feature>
<feature type="sequence conflict" description="In Ref. 1; BAC34603." evidence="4" ref="1">
    <original>A</original>
    <variation>E</variation>
    <location>
        <position position="587"/>
    </location>
</feature>
<name>GCP5_MOUSE</name>
<dbReference type="EMBL" id="AK032031">
    <property type="protein sequence ID" value="BAC27661.1"/>
    <property type="molecule type" value="mRNA"/>
</dbReference>
<dbReference type="EMBL" id="AK044887">
    <property type="protein sequence ID" value="BAC32128.1"/>
    <property type="molecule type" value="mRNA"/>
</dbReference>
<dbReference type="EMBL" id="AK051326">
    <property type="protein sequence ID" value="BAC34603.1"/>
    <property type="molecule type" value="mRNA"/>
</dbReference>
<dbReference type="EMBL" id="AK151454">
    <property type="protein sequence ID" value="BAE30414.1"/>
    <property type="molecule type" value="mRNA"/>
</dbReference>
<dbReference type="EMBL" id="AK152033">
    <property type="protein sequence ID" value="BAE30892.1"/>
    <property type="molecule type" value="mRNA"/>
</dbReference>
<dbReference type="EMBL" id="AK153331">
    <property type="protein sequence ID" value="BAE31910.1"/>
    <property type="molecule type" value="mRNA"/>
</dbReference>
<dbReference type="EMBL" id="AK153357">
    <property type="protein sequence ID" value="BAE31930.1"/>
    <property type="molecule type" value="mRNA"/>
</dbReference>
<dbReference type="EMBL" id="AK173291">
    <property type="protein sequence ID" value="BAD32569.1"/>
    <property type="molecule type" value="Transcribed_RNA"/>
</dbReference>
<dbReference type="CCDS" id="CCDS21314.1">
    <molecule id="Q8BKN5-1"/>
</dbReference>
<dbReference type="CCDS" id="CCDS90246.1">
    <molecule id="Q8BKN5-2"/>
</dbReference>
<dbReference type="RefSeq" id="NP_001347802.1">
    <molecule id="Q8BKN5-2"/>
    <property type="nucleotide sequence ID" value="NM_001360873.1"/>
</dbReference>
<dbReference type="RefSeq" id="NP_666302.2">
    <molecule id="Q8BKN5-1"/>
    <property type="nucleotide sequence ID" value="NM_146190.2"/>
</dbReference>
<dbReference type="SMR" id="Q8BKN5"/>
<dbReference type="BioGRID" id="231399">
    <property type="interactions" value="21"/>
</dbReference>
<dbReference type="FunCoup" id="Q8BKN5">
    <property type="interactions" value="1699"/>
</dbReference>
<dbReference type="IntAct" id="Q8BKN5">
    <property type="interactions" value="17"/>
</dbReference>
<dbReference type="MINT" id="Q8BKN5"/>
<dbReference type="STRING" id="10090.ENSMUSP00000032627"/>
<dbReference type="iPTMnet" id="Q8BKN5"/>
<dbReference type="PhosphoSitePlus" id="Q8BKN5"/>
<dbReference type="PaxDb" id="10090-ENSMUSP00000032627"/>
<dbReference type="PeptideAtlas" id="Q8BKN5"/>
<dbReference type="ProteomicsDB" id="272944">
    <molecule id="Q8BKN5-1"/>
</dbReference>
<dbReference type="ProteomicsDB" id="272945">
    <molecule id="Q8BKN5-2"/>
</dbReference>
<dbReference type="ProteomicsDB" id="272946">
    <molecule id="Q8BKN5-3"/>
</dbReference>
<dbReference type="Pumba" id="Q8BKN5"/>
<dbReference type="Antibodypedia" id="72633">
    <property type="antibodies" value="149 antibodies from 27 providers"/>
</dbReference>
<dbReference type="DNASU" id="233276"/>
<dbReference type="Ensembl" id="ENSMUST00000032627.5">
    <molecule id="Q8BKN5-1"/>
    <property type="protein sequence ID" value="ENSMUSP00000032627.4"/>
    <property type="gene ID" value="ENSMUSG00000033790.12"/>
</dbReference>
<dbReference type="Ensembl" id="ENSMUST00000205796.2">
    <molecule id="Q8BKN5-2"/>
    <property type="protein sequence ID" value="ENSMUSP00000146111.2"/>
    <property type="gene ID" value="ENSMUSG00000033790.12"/>
</dbReference>
<dbReference type="GeneID" id="233276"/>
<dbReference type="KEGG" id="mmu:233276"/>
<dbReference type="UCSC" id="uc009hdd.1">
    <molecule id="Q8BKN5-1"/>
    <property type="organism name" value="mouse"/>
</dbReference>
<dbReference type="UCSC" id="uc009hdf.1">
    <molecule id="Q8BKN5-2"/>
    <property type="organism name" value="mouse"/>
</dbReference>
<dbReference type="AGR" id="MGI:2178836"/>
<dbReference type="CTD" id="114791"/>
<dbReference type="MGI" id="MGI:2178836">
    <property type="gene designation" value="Tubgcp5"/>
</dbReference>
<dbReference type="VEuPathDB" id="HostDB:ENSMUSG00000033790"/>
<dbReference type="eggNOG" id="KOG4344">
    <property type="taxonomic scope" value="Eukaryota"/>
</dbReference>
<dbReference type="GeneTree" id="ENSGT00940000155962"/>
<dbReference type="HOGENOM" id="CLU_011574_0_0_1"/>
<dbReference type="InParanoid" id="Q8BKN5"/>
<dbReference type="OMA" id="RTNQFEV"/>
<dbReference type="OrthoDB" id="66546at2759"/>
<dbReference type="PhylomeDB" id="Q8BKN5"/>
<dbReference type="TreeFam" id="TF329759"/>
<dbReference type="Reactome" id="R-MMU-380270">
    <property type="pathway name" value="Recruitment of mitotic centrosome proteins and complexes"/>
</dbReference>
<dbReference type="Reactome" id="R-MMU-380320">
    <property type="pathway name" value="Recruitment of NuMA to mitotic centrosomes"/>
</dbReference>
<dbReference type="BioGRID-ORCS" id="233276">
    <property type="hits" value="8 hits in 78 CRISPR screens"/>
</dbReference>
<dbReference type="CD-CODE" id="01CA17F3">
    <property type="entry name" value="Centrosome"/>
</dbReference>
<dbReference type="PRO" id="PR:Q8BKN5"/>
<dbReference type="Proteomes" id="UP000000589">
    <property type="component" value="Chromosome 7"/>
</dbReference>
<dbReference type="RNAct" id="Q8BKN5">
    <property type="molecule type" value="protein"/>
</dbReference>
<dbReference type="Bgee" id="ENSMUSG00000033790">
    <property type="expression patterns" value="Expressed in spermatocyte and 239 other cell types or tissues"/>
</dbReference>
<dbReference type="ExpressionAtlas" id="Q8BKN5">
    <property type="expression patterns" value="baseline and differential"/>
</dbReference>
<dbReference type="GO" id="GO:0005813">
    <property type="term" value="C:centrosome"/>
    <property type="evidence" value="ECO:0007669"/>
    <property type="project" value="UniProtKB-SubCell"/>
</dbReference>
<dbReference type="GO" id="GO:0036064">
    <property type="term" value="C:ciliary basal body"/>
    <property type="evidence" value="ECO:0007669"/>
    <property type="project" value="Ensembl"/>
</dbReference>
<dbReference type="GO" id="GO:0005829">
    <property type="term" value="C:cytosol"/>
    <property type="evidence" value="ECO:0007669"/>
    <property type="project" value="Ensembl"/>
</dbReference>
<dbReference type="GO" id="GO:0000931">
    <property type="term" value="C:gamma-tubulin ring complex"/>
    <property type="evidence" value="ECO:0007669"/>
    <property type="project" value="Ensembl"/>
</dbReference>
<dbReference type="GO" id="GO:0005874">
    <property type="term" value="C:microtubule"/>
    <property type="evidence" value="ECO:0007669"/>
    <property type="project" value="UniProtKB-KW"/>
</dbReference>
<dbReference type="GO" id="GO:0000922">
    <property type="term" value="C:spindle pole"/>
    <property type="evidence" value="ECO:0007669"/>
    <property type="project" value="InterPro"/>
</dbReference>
<dbReference type="GO" id="GO:0043015">
    <property type="term" value="F:gamma-tubulin binding"/>
    <property type="evidence" value="ECO:0007669"/>
    <property type="project" value="InterPro"/>
</dbReference>
<dbReference type="GO" id="GO:0008017">
    <property type="term" value="F:microtubule binding"/>
    <property type="evidence" value="ECO:0007669"/>
    <property type="project" value="Ensembl"/>
</dbReference>
<dbReference type="GO" id="GO:0007020">
    <property type="term" value="P:microtubule nucleation"/>
    <property type="evidence" value="ECO:0007669"/>
    <property type="project" value="Ensembl"/>
</dbReference>
<dbReference type="CDD" id="cd22572">
    <property type="entry name" value="GCP5_NTD"/>
    <property type="match status" value="1"/>
</dbReference>
<dbReference type="FunFam" id="1.20.120.1900:FF:000005">
    <property type="entry name" value="Gamma-tubulin complex component"/>
    <property type="match status" value="1"/>
</dbReference>
<dbReference type="Gene3D" id="1.20.120.1900">
    <property type="entry name" value="Gamma-tubulin complex, C-terminal domain"/>
    <property type="match status" value="1"/>
</dbReference>
<dbReference type="InterPro" id="IPR007259">
    <property type="entry name" value="GCP"/>
</dbReference>
<dbReference type="InterPro" id="IPR040457">
    <property type="entry name" value="GCP_C"/>
</dbReference>
<dbReference type="InterPro" id="IPR042241">
    <property type="entry name" value="GCP_C_sf"/>
</dbReference>
<dbReference type="InterPro" id="IPR041470">
    <property type="entry name" value="GCP_N"/>
</dbReference>
<dbReference type="PANTHER" id="PTHR19302">
    <property type="entry name" value="GAMMA TUBULIN COMPLEX PROTEIN"/>
    <property type="match status" value="1"/>
</dbReference>
<dbReference type="PANTHER" id="PTHR19302:SF33">
    <property type="entry name" value="GAMMA-TUBULIN COMPLEX COMPONENT 5"/>
    <property type="match status" value="1"/>
</dbReference>
<dbReference type="Pfam" id="PF04130">
    <property type="entry name" value="GCP_C_terminal"/>
    <property type="match status" value="1"/>
</dbReference>
<dbReference type="Pfam" id="PF17681">
    <property type="entry name" value="GCP_N_terminal"/>
    <property type="match status" value="1"/>
</dbReference>
<proteinExistence type="evidence at transcript level"/>
<comment type="function">
    <text evidence="1">Component of the gamma-tubulin ring complex (gTuRC) which mediates microtubule nucleation (By similarity). The gTuRC regulates the minus-end nucleation of alpha-beta tubulin heterodimers that grow into microtubule protafilaments, a critical step in centrosome duplication and spindle formation (By similarity).</text>
</comment>
<comment type="subunit">
    <text evidence="1">Component of the gamma-tubulin ring complex (gTuRC) consisting of TUBGCP2, TUBGCP3, TUBGCP4, TUBGCP5 and TUBGCP6 and gamma-tubulin TUBG1 or TUBG2 (By similarity). TUBGCP2, TUBGCP3, TUBGCP4, TUBGCP5 and TUBGCP6 assemble in a 5:5:2:1:1 stoichiometry; each is associated with a gamma-tubulin, thereby arranging 14 gamma-tubulins in a helical manner (By similarity). Gamma-tubulin at the first position is blocked by TUBGCP3 at the last position, allowing 13 protafilaments to grow into a microtubule (By similarity). The gTuRC (via TUBGCP3 and TUBGCP6) interacts with ACTB and MZT1; the interactions form a luminal bridge that stabilizes the initial structure during complex assembly (By similarity). The gTuRC (via TUBGCP2) interacts with MZT2A/MZT2B and CDK5RAP2 (via CM1 motif); the interactions play a role in gTuRC activation (By similarity).</text>
</comment>
<comment type="subcellular location">
    <subcellularLocation>
        <location evidence="1">Cytoplasm</location>
        <location evidence="1">Cytoskeleton</location>
        <location evidence="1">Microtubule organizing center</location>
        <location evidence="1">Centrosome</location>
    </subcellularLocation>
</comment>
<comment type="alternative products">
    <event type="alternative splicing"/>
    <isoform>
        <id>Q8BKN5-1</id>
        <name>1</name>
        <sequence type="displayed"/>
    </isoform>
    <isoform>
        <id>Q8BKN5-2</id>
        <name>2</name>
        <sequence type="described" ref="VSP_032040"/>
    </isoform>
    <isoform>
        <id>Q8BKN5-3</id>
        <name>3</name>
        <sequence type="described" ref="VSP_032041"/>
    </isoform>
</comment>
<comment type="similarity">
    <text evidence="4">Belongs to the TUBGCP family.</text>
</comment>
<evidence type="ECO:0000250" key="1">
    <source>
        <dbReference type="UniProtKB" id="Q96RT8"/>
    </source>
</evidence>
<evidence type="ECO:0000256" key="2">
    <source>
        <dbReference type="SAM" id="MobiDB-lite"/>
    </source>
</evidence>
<evidence type="ECO:0000303" key="3">
    <source>
    </source>
</evidence>
<evidence type="ECO:0000305" key="4"/>
<accession>Q8BKN5</accession>
<accession>Q3U8X5</accession>
<accession>Q69Z75</accession>
<accession>Q8BLJ9</accession>
<accession>Q8C083</accession>
<organism>
    <name type="scientific">Mus musculus</name>
    <name type="common">Mouse</name>
    <dbReference type="NCBI Taxonomy" id="10090"/>
    <lineage>
        <taxon>Eukaryota</taxon>
        <taxon>Metazoa</taxon>
        <taxon>Chordata</taxon>
        <taxon>Craniata</taxon>
        <taxon>Vertebrata</taxon>
        <taxon>Euteleostomi</taxon>
        <taxon>Mammalia</taxon>
        <taxon>Eutheria</taxon>
        <taxon>Euarchontoglires</taxon>
        <taxon>Glires</taxon>
        <taxon>Rodentia</taxon>
        <taxon>Myomorpha</taxon>
        <taxon>Muroidea</taxon>
        <taxon>Muridae</taxon>
        <taxon>Murinae</taxon>
        <taxon>Mus</taxon>
        <taxon>Mus</taxon>
    </lineage>
</organism>